<comment type="function">
    <text evidence="1">Regulatory subunit of a potassium efflux system that confers protection against electrophiles. Required for full activity of KefC. Shows redox enzymatic activity, but this enzymatic activity is not required for activation of KefC.</text>
</comment>
<comment type="catalytic activity">
    <reaction evidence="1">
        <text>a quinone + NADH + H(+) = a quinol + NAD(+)</text>
        <dbReference type="Rhea" id="RHEA:46160"/>
        <dbReference type="ChEBI" id="CHEBI:15378"/>
        <dbReference type="ChEBI" id="CHEBI:24646"/>
        <dbReference type="ChEBI" id="CHEBI:57540"/>
        <dbReference type="ChEBI" id="CHEBI:57945"/>
        <dbReference type="ChEBI" id="CHEBI:132124"/>
        <dbReference type="EC" id="1.6.5.2"/>
    </reaction>
</comment>
<comment type="catalytic activity">
    <reaction evidence="1">
        <text>a quinone + NADPH + H(+) = a quinol + NADP(+)</text>
        <dbReference type="Rhea" id="RHEA:46164"/>
        <dbReference type="ChEBI" id="CHEBI:15378"/>
        <dbReference type="ChEBI" id="CHEBI:24646"/>
        <dbReference type="ChEBI" id="CHEBI:57783"/>
        <dbReference type="ChEBI" id="CHEBI:58349"/>
        <dbReference type="ChEBI" id="CHEBI:132124"/>
        <dbReference type="EC" id="1.6.5.2"/>
    </reaction>
</comment>
<comment type="cofactor">
    <cofactor evidence="1">
        <name>FMN</name>
        <dbReference type="ChEBI" id="CHEBI:58210"/>
    </cofactor>
</comment>
<comment type="subunit">
    <text evidence="1">Homodimer. Interacts with KefC.</text>
</comment>
<comment type="subcellular location">
    <subcellularLocation>
        <location evidence="1">Cell inner membrane</location>
        <topology evidence="1">Peripheral membrane protein</topology>
        <orientation evidence="1">Cytoplasmic side</orientation>
    </subcellularLocation>
</comment>
<comment type="similarity">
    <text evidence="1">Belongs to the NAD(P)H dehydrogenase (quinone) family. KefF subfamily.</text>
</comment>
<organism>
    <name type="scientific">Escherichia coli O17:K52:H18 (strain UMN026 / ExPEC)</name>
    <dbReference type="NCBI Taxonomy" id="585056"/>
    <lineage>
        <taxon>Bacteria</taxon>
        <taxon>Pseudomonadati</taxon>
        <taxon>Pseudomonadota</taxon>
        <taxon>Gammaproteobacteria</taxon>
        <taxon>Enterobacterales</taxon>
        <taxon>Enterobacteriaceae</taxon>
        <taxon>Escherichia</taxon>
    </lineage>
</organism>
<gene>
    <name evidence="1" type="primary">kefF</name>
    <name type="ordered locus">ECUMN_0048</name>
</gene>
<sequence length="176" mass="20170">MILIIYAHPYPHHSHANKRMLEQARTLEGVEIRSLYQLYPDFNIDIAAEQEALSRADLIVWQHPMQWYSIPPLLKLWIDKVFSHGWAYGHGGTALHGKHLLWAVTTGGGESHFEIGAHPGFDVLSQPLQATAIYCGLNWLPPFAMHCTFICDDETLEGQARHYKQRLLEWQEAHHG</sequence>
<dbReference type="EC" id="1.6.5.2" evidence="1"/>
<dbReference type="EMBL" id="CU928163">
    <property type="protein sequence ID" value="CAR11271.1"/>
    <property type="molecule type" value="Genomic_DNA"/>
</dbReference>
<dbReference type="RefSeq" id="WP_000600725.1">
    <property type="nucleotide sequence ID" value="NC_011751.1"/>
</dbReference>
<dbReference type="RefSeq" id="YP_002410826.1">
    <property type="nucleotide sequence ID" value="NC_011751.1"/>
</dbReference>
<dbReference type="SMR" id="B7N7S1"/>
<dbReference type="STRING" id="585056.ECUMN_0048"/>
<dbReference type="GeneID" id="89519427"/>
<dbReference type="KEGG" id="eum:ECUMN_0048"/>
<dbReference type="PATRIC" id="fig|585056.7.peg.235"/>
<dbReference type="HOGENOM" id="CLU_058643_0_2_6"/>
<dbReference type="Proteomes" id="UP000007097">
    <property type="component" value="Chromosome"/>
</dbReference>
<dbReference type="GO" id="GO:0005886">
    <property type="term" value="C:plasma membrane"/>
    <property type="evidence" value="ECO:0007669"/>
    <property type="project" value="UniProtKB-SubCell"/>
</dbReference>
<dbReference type="GO" id="GO:0009055">
    <property type="term" value="F:electron transfer activity"/>
    <property type="evidence" value="ECO:0007669"/>
    <property type="project" value="TreeGrafter"/>
</dbReference>
<dbReference type="GO" id="GO:0010181">
    <property type="term" value="F:FMN binding"/>
    <property type="evidence" value="ECO:0007669"/>
    <property type="project" value="UniProtKB-UniRule"/>
</dbReference>
<dbReference type="GO" id="GO:0050136">
    <property type="term" value="F:NADH:ubiquinone reductase (non-electrogenic) activity"/>
    <property type="evidence" value="ECO:0007669"/>
    <property type="project" value="RHEA"/>
</dbReference>
<dbReference type="GO" id="GO:0008753">
    <property type="term" value="F:NADPH dehydrogenase (quinone) activity"/>
    <property type="evidence" value="ECO:0007669"/>
    <property type="project" value="RHEA"/>
</dbReference>
<dbReference type="GO" id="GO:1901381">
    <property type="term" value="P:positive regulation of potassium ion transmembrane transport"/>
    <property type="evidence" value="ECO:0007669"/>
    <property type="project" value="UniProtKB-UniRule"/>
</dbReference>
<dbReference type="GO" id="GO:0006813">
    <property type="term" value="P:potassium ion transport"/>
    <property type="evidence" value="ECO:0007669"/>
    <property type="project" value="InterPro"/>
</dbReference>
<dbReference type="FunFam" id="3.40.50.360:FF:000008">
    <property type="entry name" value="Glutathione-regulated potassium-efflux system ancillary protein KefF"/>
    <property type="match status" value="1"/>
</dbReference>
<dbReference type="Gene3D" id="3.40.50.360">
    <property type="match status" value="1"/>
</dbReference>
<dbReference type="HAMAP" id="MF_01414">
    <property type="entry name" value="K_H_efflux_KefF"/>
    <property type="match status" value="1"/>
</dbReference>
<dbReference type="InterPro" id="IPR003680">
    <property type="entry name" value="Flavodoxin_fold"/>
</dbReference>
<dbReference type="InterPro" id="IPR029039">
    <property type="entry name" value="Flavoprotein-like_sf"/>
</dbReference>
<dbReference type="InterPro" id="IPR023948">
    <property type="entry name" value="K_H_efflux_KefF"/>
</dbReference>
<dbReference type="InterPro" id="IPR046980">
    <property type="entry name" value="KefG/KefF"/>
</dbReference>
<dbReference type="NCBIfam" id="NF002044">
    <property type="entry name" value="PRK00871.1"/>
    <property type="match status" value="1"/>
</dbReference>
<dbReference type="PANTHER" id="PTHR47307:SF2">
    <property type="entry name" value="GLUTATHIONE-REGULATED POTASSIUM-EFFLUX SYSTEM ANCILLARY PROTEIN KEFF"/>
    <property type="match status" value="1"/>
</dbReference>
<dbReference type="PANTHER" id="PTHR47307">
    <property type="entry name" value="GLUTATHIONE-REGULATED POTASSIUM-EFFLUX SYSTEM ANCILLARY PROTEIN KEFG"/>
    <property type="match status" value="1"/>
</dbReference>
<dbReference type="Pfam" id="PF02525">
    <property type="entry name" value="Flavodoxin_2"/>
    <property type="match status" value="1"/>
</dbReference>
<dbReference type="SUPFAM" id="SSF52218">
    <property type="entry name" value="Flavoproteins"/>
    <property type="match status" value="1"/>
</dbReference>
<protein>
    <recommendedName>
        <fullName evidence="1">Glutathione-regulated potassium-efflux system ancillary protein KefF</fullName>
    </recommendedName>
    <alternativeName>
        <fullName evidence="1">Quinone oxidoreductase KefF</fullName>
        <ecNumber evidence="1">1.6.5.2</ecNumber>
    </alternativeName>
</protein>
<evidence type="ECO:0000255" key="1">
    <source>
        <dbReference type="HAMAP-Rule" id="MF_01414"/>
    </source>
</evidence>
<keyword id="KW-0997">Cell inner membrane</keyword>
<keyword id="KW-1003">Cell membrane</keyword>
<keyword id="KW-0285">Flavoprotein</keyword>
<keyword id="KW-0288">FMN</keyword>
<keyword id="KW-0472">Membrane</keyword>
<keyword id="KW-0520">NAD</keyword>
<keyword id="KW-0560">Oxidoreductase</keyword>
<reference key="1">
    <citation type="journal article" date="2009" name="PLoS Genet.">
        <title>Organised genome dynamics in the Escherichia coli species results in highly diverse adaptive paths.</title>
        <authorList>
            <person name="Touchon M."/>
            <person name="Hoede C."/>
            <person name="Tenaillon O."/>
            <person name="Barbe V."/>
            <person name="Baeriswyl S."/>
            <person name="Bidet P."/>
            <person name="Bingen E."/>
            <person name="Bonacorsi S."/>
            <person name="Bouchier C."/>
            <person name="Bouvet O."/>
            <person name="Calteau A."/>
            <person name="Chiapello H."/>
            <person name="Clermont O."/>
            <person name="Cruveiller S."/>
            <person name="Danchin A."/>
            <person name="Diard M."/>
            <person name="Dossat C."/>
            <person name="Karoui M.E."/>
            <person name="Frapy E."/>
            <person name="Garry L."/>
            <person name="Ghigo J.M."/>
            <person name="Gilles A.M."/>
            <person name="Johnson J."/>
            <person name="Le Bouguenec C."/>
            <person name="Lescat M."/>
            <person name="Mangenot S."/>
            <person name="Martinez-Jehanne V."/>
            <person name="Matic I."/>
            <person name="Nassif X."/>
            <person name="Oztas S."/>
            <person name="Petit M.A."/>
            <person name="Pichon C."/>
            <person name="Rouy Z."/>
            <person name="Ruf C.S."/>
            <person name="Schneider D."/>
            <person name="Tourret J."/>
            <person name="Vacherie B."/>
            <person name="Vallenet D."/>
            <person name="Medigue C."/>
            <person name="Rocha E.P.C."/>
            <person name="Denamur E."/>
        </authorList>
    </citation>
    <scope>NUCLEOTIDE SEQUENCE [LARGE SCALE GENOMIC DNA]</scope>
    <source>
        <strain>UMN026 / ExPEC</strain>
    </source>
</reference>
<name>KEFF_ECOLU</name>
<accession>B7N7S1</accession>
<proteinExistence type="inferred from homology"/>
<feature type="chain" id="PRO_1000145558" description="Glutathione-regulated potassium-efflux system ancillary protein KefF">
    <location>
        <begin position="1"/>
        <end position="176"/>
    </location>
</feature>
<feature type="binding site" evidence="1">
    <location>
        <position position="8"/>
    </location>
    <ligand>
        <name>FMN</name>
        <dbReference type="ChEBI" id="CHEBI:58210"/>
    </ligand>
</feature>
<feature type="binding site" evidence="1">
    <location>
        <begin position="14"/>
        <end position="17"/>
    </location>
    <ligand>
        <name>FMN</name>
        <dbReference type="ChEBI" id="CHEBI:58210"/>
    </ligand>
</feature>
<feature type="binding site" evidence="1">
    <location>
        <begin position="65"/>
        <end position="68"/>
    </location>
    <ligand>
        <name>FMN</name>
        <dbReference type="ChEBI" id="CHEBI:58210"/>
    </ligand>
</feature>
<feature type="binding site" evidence="1">
    <location>
        <begin position="105"/>
        <end position="108"/>
    </location>
    <ligand>
        <name>FMN</name>
        <dbReference type="ChEBI" id="CHEBI:58210"/>
    </ligand>
</feature>